<comment type="function">
    <text evidence="1">Part of the ABC transporter complex TauABC involved in taurine import. Responsible for energy coupling to the transport system.</text>
</comment>
<comment type="catalytic activity">
    <reaction evidence="1">
        <text>taurine(out) + ATP + H2O = taurine(in) + ADP + phosphate + H(+)</text>
        <dbReference type="Rhea" id="RHEA:14613"/>
        <dbReference type="ChEBI" id="CHEBI:15377"/>
        <dbReference type="ChEBI" id="CHEBI:15378"/>
        <dbReference type="ChEBI" id="CHEBI:30616"/>
        <dbReference type="ChEBI" id="CHEBI:43474"/>
        <dbReference type="ChEBI" id="CHEBI:456216"/>
        <dbReference type="ChEBI" id="CHEBI:507393"/>
        <dbReference type="EC" id="7.6.2.7"/>
    </reaction>
</comment>
<comment type="subunit">
    <text evidence="1">The complex is composed of two ATP-binding proteins (TauB), two transmembrane proteins (TauC) and a solute-binding protein (TauA).</text>
</comment>
<comment type="subcellular location">
    <subcellularLocation>
        <location evidence="1">Cell inner membrane</location>
        <topology evidence="1">Peripheral membrane protein</topology>
    </subcellularLocation>
</comment>
<comment type="similarity">
    <text evidence="1">Belongs to the ABC transporter superfamily. Taurine importer (TC 3.A.1.17.1) family.</text>
</comment>
<reference key="1">
    <citation type="journal article" date="2005" name="Nucleic Acids Res.">
        <title>Genome dynamics and diversity of Shigella species, the etiologic agents of bacillary dysentery.</title>
        <authorList>
            <person name="Yang F."/>
            <person name="Yang J."/>
            <person name="Zhang X."/>
            <person name="Chen L."/>
            <person name="Jiang Y."/>
            <person name="Yan Y."/>
            <person name="Tang X."/>
            <person name="Wang J."/>
            <person name="Xiong Z."/>
            <person name="Dong J."/>
            <person name="Xue Y."/>
            <person name="Zhu Y."/>
            <person name="Xu X."/>
            <person name="Sun L."/>
            <person name="Chen S."/>
            <person name="Nie H."/>
            <person name="Peng J."/>
            <person name="Xu J."/>
            <person name="Wang Y."/>
            <person name="Yuan Z."/>
            <person name="Wen Y."/>
            <person name="Yao Z."/>
            <person name="Shen Y."/>
            <person name="Qiang B."/>
            <person name="Hou Y."/>
            <person name="Yu J."/>
            <person name="Jin Q."/>
        </authorList>
    </citation>
    <scope>NUCLEOTIDE SEQUENCE [LARGE SCALE GENOMIC DNA]</scope>
    <source>
        <strain>Sb227</strain>
    </source>
</reference>
<evidence type="ECO:0000255" key="1">
    <source>
        <dbReference type="HAMAP-Rule" id="MF_01714"/>
    </source>
</evidence>
<proteinExistence type="inferred from homology"/>
<keyword id="KW-0067">ATP-binding</keyword>
<keyword id="KW-0997">Cell inner membrane</keyword>
<keyword id="KW-1003">Cell membrane</keyword>
<keyword id="KW-0472">Membrane</keyword>
<keyword id="KW-0547">Nucleotide-binding</keyword>
<keyword id="KW-1278">Translocase</keyword>
<keyword id="KW-0813">Transport</keyword>
<feature type="chain" id="PRO_0000275843" description="Taurine import ATP-binding protein TauB">
    <location>
        <begin position="1"/>
        <end position="255"/>
    </location>
</feature>
<feature type="domain" description="ABC transporter" evidence="1">
    <location>
        <begin position="2"/>
        <end position="229"/>
    </location>
</feature>
<feature type="binding site" evidence="1">
    <location>
        <begin position="34"/>
        <end position="41"/>
    </location>
    <ligand>
        <name>ATP</name>
        <dbReference type="ChEBI" id="CHEBI:30616"/>
    </ligand>
</feature>
<dbReference type="EC" id="7.6.2.7" evidence="1"/>
<dbReference type="EMBL" id="CP000036">
    <property type="protein sequence ID" value="ABB64975.1"/>
    <property type="molecule type" value="Genomic_DNA"/>
</dbReference>
<dbReference type="RefSeq" id="WP_000939377.1">
    <property type="nucleotide sequence ID" value="NC_007613.1"/>
</dbReference>
<dbReference type="SMR" id="Q325N3"/>
<dbReference type="KEGG" id="sbo:SBO_0260"/>
<dbReference type="HOGENOM" id="CLU_000604_1_22_6"/>
<dbReference type="Proteomes" id="UP000007067">
    <property type="component" value="Chromosome"/>
</dbReference>
<dbReference type="GO" id="GO:0005886">
    <property type="term" value="C:plasma membrane"/>
    <property type="evidence" value="ECO:0007669"/>
    <property type="project" value="UniProtKB-SubCell"/>
</dbReference>
<dbReference type="GO" id="GO:0015411">
    <property type="term" value="F:ABC-type taurine transporter transporter activity"/>
    <property type="evidence" value="ECO:0007669"/>
    <property type="project" value="UniProtKB-EC"/>
</dbReference>
<dbReference type="GO" id="GO:0005524">
    <property type="term" value="F:ATP binding"/>
    <property type="evidence" value="ECO:0007669"/>
    <property type="project" value="UniProtKB-KW"/>
</dbReference>
<dbReference type="GO" id="GO:0016887">
    <property type="term" value="F:ATP hydrolysis activity"/>
    <property type="evidence" value="ECO:0007669"/>
    <property type="project" value="InterPro"/>
</dbReference>
<dbReference type="CDD" id="cd03293">
    <property type="entry name" value="ABC_NrtD_SsuB_transporters"/>
    <property type="match status" value="1"/>
</dbReference>
<dbReference type="FunFam" id="3.40.50.300:FF:000653">
    <property type="entry name" value="Aliphatic sulfonates import ATP-binding protein SsuB"/>
    <property type="match status" value="1"/>
</dbReference>
<dbReference type="Gene3D" id="3.40.50.300">
    <property type="entry name" value="P-loop containing nucleotide triphosphate hydrolases"/>
    <property type="match status" value="1"/>
</dbReference>
<dbReference type="InterPro" id="IPR003593">
    <property type="entry name" value="AAA+_ATPase"/>
</dbReference>
<dbReference type="InterPro" id="IPR003439">
    <property type="entry name" value="ABC_transporter-like_ATP-bd"/>
</dbReference>
<dbReference type="InterPro" id="IPR017871">
    <property type="entry name" value="ABC_transporter-like_CS"/>
</dbReference>
<dbReference type="InterPro" id="IPR050166">
    <property type="entry name" value="ABC_transporter_ATP-bind"/>
</dbReference>
<dbReference type="InterPro" id="IPR027417">
    <property type="entry name" value="P-loop_NTPase"/>
</dbReference>
<dbReference type="NCBIfam" id="NF008421">
    <property type="entry name" value="PRK11248.1"/>
    <property type="match status" value="1"/>
</dbReference>
<dbReference type="PANTHER" id="PTHR42788:SF18">
    <property type="entry name" value="TAURINE IMPORT ATP-BINDING PROTEIN TAUB"/>
    <property type="match status" value="1"/>
</dbReference>
<dbReference type="PANTHER" id="PTHR42788">
    <property type="entry name" value="TAURINE IMPORT ATP-BINDING PROTEIN-RELATED"/>
    <property type="match status" value="1"/>
</dbReference>
<dbReference type="Pfam" id="PF00005">
    <property type="entry name" value="ABC_tran"/>
    <property type="match status" value="1"/>
</dbReference>
<dbReference type="SMART" id="SM00382">
    <property type="entry name" value="AAA"/>
    <property type="match status" value="1"/>
</dbReference>
<dbReference type="SUPFAM" id="SSF52540">
    <property type="entry name" value="P-loop containing nucleoside triphosphate hydrolases"/>
    <property type="match status" value="1"/>
</dbReference>
<dbReference type="PROSITE" id="PS00211">
    <property type="entry name" value="ABC_TRANSPORTER_1"/>
    <property type="match status" value="1"/>
</dbReference>
<dbReference type="PROSITE" id="PS50893">
    <property type="entry name" value="ABC_TRANSPORTER_2"/>
    <property type="match status" value="1"/>
</dbReference>
<dbReference type="PROSITE" id="PS51250">
    <property type="entry name" value="TAUB"/>
    <property type="match status" value="1"/>
</dbReference>
<sequence>MLQISHLYADYGGKPALEDINLTLESGELLVVLGPSGCGKTTLLNLIAGFVPYQHGSIQLAGKRIEGPGAERGVVFQNEGLLPWRNVQDNVAFGLQLAGIEKMQRLEIAHQVLKKVGLEGAEKRYIWQLSGGQRQRVGIARALAANPQLLLLDEPFGALDAFTRDQMQTLLLKLWQETGKQVLLITHDIEEAVFMATELVLLSSGPGRVLERLPLNFARRFVAGESSRSIKSDPQFIAMREYVLSRVFEQREAFS</sequence>
<protein>
    <recommendedName>
        <fullName evidence="1">Taurine import ATP-binding protein TauB</fullName>
        <ecNumber evidence="1">7.6.2.7</ecNumber>
    </recommendedName>
</protein>
<gene>
    <name evidence="1" type="primary">tauB</name>
    <name type="ordered locus">SBO_0260</name>
</gene>
<organism>
    <name type="scientific">Shigella boydii serotype 4 (strain Sb227)</name>
    <dbReference type="NCBI Taxonomy" id="300268"/>
    <lineage>
        <taxon>Bacteria</taxon>
        <taxon>Pseudomonadati</taxon>
        <taxon>Pseudomonadota</taxon>
        <taxon>Gammaproteobacteria</taxon>
        <taxon>Enterobacterales</taxon>
        <taxon>Enterobacteriaceae</taxon>
        <taxon>Shigella</taxon>
    </lineage>
</organism>
<accession>Q325N3</accession>
<name>TAUB_SHIBS</name>